<accession>Q0HDK0</accession>
<name>NFUA_SHESM</name>
<protein>
    <recommendedName>
        <fullName evidence="1">Fe/S biogenesis protein NfuA</fullName>
    </recommendedName>
</protein>
<keyword id="KW-0004">4Fe-4S</keyword>
<keyword id="KW-0408">Iron</keyword>
<keyword id="KW-0411">Iron-sulfur</keyword>
<keyword id="KW-0479">Metal-binding</keyword>
<comment type="function">
    <text evidence="1">Involved in iron-sulfur cluster biogenesis. Binds a 4Fe-4S cluster, can transfer this cluster to apoproteins, and thereby intervenes in the maturation of Fe/S proteins. Could also act as a scaffold/chaperone for damaged Fe/S proteins.</text>
</comment>
<comment type="cofactor">
    <cofactor evidence="1">
        <name>[4Fe-4S] cluster</name>
        <dbReference type="ChEBI" id="CHEBI:49883"/>
    </cofactor>
    <text evidence="1">Binds 1 [4Fe-4S] cluster per subunit. The cluster is presumably bound at the interface of two monomers.</text>
</comment>
<comment type="subunit">
    <text evidence="1">Homodimer.</text>
</comment>
<comment type="similarity">
    <text evidence="1">Belongs to the NfuA family.</text>
</comment>
<dbReference type="EMBL" id="CP000446">
    <property type="protein sequence ID" value="ABI40867.1"/>
    <property type="molecule type" value="Genomic_DNA"/>
</dbReference>
<dbReference type="RefSeq" id="WP_011624525.1">
    <property type="nucleotide sequence ID" value="NC_008321.1"/>
</dbReference>
<dbReference type="SMR" id="Q0HDK0"/>
<dbReference type="KEGG" id="she:Shewmr4_3804"/>
<dbReference type="HOGENOM" id="CLU_094569_0_0_6"/>
<dbReference type="GO" id="GO:0051539">
    <property type="term" value="F:4 iron, 4 sulfur cluster binding"/>
    <property type="evidence" value="ECO:0007669"/>
    <property type="project" value="UniProtKB-UniRule"/>
</dbReference>
<dbReference type="GO" id="GO:0005506">
    <property type="term" value="F:iron ion binding"/>
    <property type="evidence" value="ECO:0007669"/>
    <property type="project" value="InterPro"/>
</dbReference>
<dbReference type="GO" id="GO:0016226">
    <property type="term" value="P:iron-sulfur cluster assembly"/>
    <property type="evidence" value="ECO:0007669"/>
    <property type="project" value="UniProtKB-UniRule"/>
</dbReference>
<dbReference type="GO" id="GO:0051604">
    <property type="term" value="P:protein maturation"/>
    <property type="evidence" value="ECO:0007669"/>
    <property type="project" value="UniProtKB-UniRule"/>
</dbReference>
<dbReference type="Gene3D" id="3.30.300.130">
    <property type="entry name" value="Fe-S cluster assembly (FSCA)"/>
    <property type="match status" value="1"/>
</dbReference>
<dbReference type="Gene3D" id="2.60.300.12">
    <property type="entry name" value="HesB-like domain"/>
    <property type="match status" value="1"/>
</dbReference>
<dbReference type="HAMAP" id="MF_01637">
    <property type="entry name" value="Fe_S_biogen_NfuA"/>
    <property type="match status" value="1"/>
</dbReference>
<dbReference type="InterPro" id="IPR017726">
    <property type="entry name" value="Fe/S_biogenesis_protein_NfuA"/>
</dbReference>
<dbReference type="InterPro" id="IPR000361">
    <property type="entry name" value="FeS_biogenesis"/>
</dbReference>
<dbReference type="InterPro" id="IPR034904">
    <property type="entry name" value="FSCA_dom_sf"/>
</dbReference>
<dbReference type="InterPro" id="IPR035903">
    <property type="entry name" value="HesB-like_dom_sf"/>
</dbReference>
<dbReference type="InterPro" id="IPR001075">
    <property type="entry name" value="NIF_FeS_clus_asmbl_NifU_C"/>
</dbReference>
<dbReference type="NCBIfam" id="NF008392">
    <property type="entry name" value="PRK11190.1"/>
    <property type="match status" value="1"/>
</dbReference>
<dbReference type="NCBIfam" id="TIGR03341">
    <property type="entry name" value="YhgI_GntY"/>
    <property type="match status" value="1"/>
</dbReference>
<dbReference type="PANTHER" id="PTHR11178:SF51">
    <property type="entry name" value="FE_S BIOGENESIS PROTEIN NFUA"/>
    <property type="match status" value="1"/>
</dbReference>
<dbReference type="PANTHER" id="PTHR11178">
    <property type="entry name" value="IRON-SULFUR CLUSTER SCAFFOLD PROTEIN NFU-RELATED"/>
    <property type="match status" value="1"/>
</dbReference>
<dbReference type="Pfam" id="PF01521">
    <property type="entry name" value="Fe-S_biosyn"/>
    <property type="match status" value="1"/>
</dbReference>
<dbReference type="Pfam" id="PF01106">
    <property type="entry name" value="NifU"/>
    <property type="match status" value="1"/>
</dbReference>
<dbReference type="SUPFAM" id="SSF117916">
    <property type="entry name" value="Fe-S cluster assembly (FSCA) domain-like"/>
    <property type="match status" value="1"/>
</dbReference>
<dbReference type="SUPFAM" id="SSF89360">
    <property type="entry name" value="HesB-like domain"/>
    <property type="match status" value="1"/>
</dbReference>
<reference key="1">
    <citation type="submission" date="2006-08" db="EMBL/GenBank/DDBJ databases">
        <title>Complete sequence of Shewanella sp. MR-4.</title>
        <authorList>
            <consortium name="US DOE Joint Genome Institute"/>
            <person name="Copeland A."/>
            <person name="Lucas S."/>
            <person name="Lapidus A."/>
            <person name="Barry K."/>
            <person name="Detter J.C."/>
            <person name="Glavina del Rio T."/>
            <person name="Hammon N."/>
            <person name="Israni S."/>
            <person name="Dalin E."/>
            <person name="Tice H."/>
            <person name="Pitluck S."/>
            <person name="Kiss H."/>
            <person name="Brettin T."/>
            <person name="Bruce D."/>
            <person name="Han C."/>
            <person name="Tapia R."/>
            <person name="Gilna P."/>
            <person name="Schmutz J."/>
            <person name="Larimer F."/>
            <person name="Land M."/>
            <person name="Hauser L."/>
            <person name="Kyrpides N."/>
            <person name="Mikhailova N."/>
            <person name="Nealson K."/>
            <person name="Konstantinidis K."/>
            <person name="Klappenbach J."/>
            <person name="Tiedje J."/>
            <person name="Richardson P."/>
        </authorList>
    </citation>
    <scope>NUCLEOTIDE SEQUENCE [LARGE SCALE GENOMIC DNA]</scope>
    <source>
        <strain>MR-4</strain>
    </source>
</reference>
<proteinExistence type="inferred from homology"/>
<gene>
    <name evidence="1" type="primary">nfuA</name>
    <name type="ordered locus">Shewmr4_3804</name>
</gene>
<feature type="chain" id="PRO_0000268241" description="Fe/S biogenesis protein NfuA">
    <location>
        <begin position="1"/>
        <end position="192"/>
    </location>
</feature>
<feature type="binding site" evidence="1">
    <location>
        <position position="149"/>
    </location>
    <ligand>
        <name>[4Fe-4S] cluster</name>
        <dbReference type="ChEBI" id="CHEBI:49883"/>
    </ligand>
</feature>
<feature type="binding site" evidence="1">
    <location>
        <position position="152"/>
    </location>
    <ligand>
        <name>[4Fe-4S] cluster</name>
        <dbReference type="ChEBI" id="CHEBI:49883"/>
    </ligand>
</feature>
<evidence type="ECO:0000255" key="1">
    <source>
        <dbReference type="HAMAP-Rule" id="MF_01637"/>
    </source>
</evidence>
<organism>
    <name type="scientific">Shewanella sp. (strain MR-4)</name>
    <dbReference type="NCBI Taxonomy" id="60480"/>
    <lineage>
        <taxon>Bacteria</taxon>
        <taxon>Pseudomonadati</taxon>
        <taxon>Pseudomonadota</taxon>
        <taxon>Gammaproteobacteria</taxon>
        <taxon>Alteromonadales</taxon>
        <taxon>Shewanellaceae</taxon>
        <taxon>Shewanella</taxon>
    </lineage>
</organism>
<sequence>MITISDAAQAHFVKLLADQPEGTHIRVFVISPGTAQAECGVSYCPPDAVESDDIELEFNGFSAMVDEKSAPFLEEASIDFVTDQLGSQLTLKAPNAKMRKVASDAPLAERVEYVIQSEINPQLASHGGNIMLVEITQEGVAVLQFGGGCNGCSQVDITLKDGIEKQLLDMFPGELSGVSDVTDHQHGAHSYA</sequence>